<comment type="function">
    <text evidence="1">An aminoacyl-tRNA editing enzyme that deacylates mischarged D-aminoacyl-tRNAs. Also deacylates mischarged glycyl-tRNA(Ala), protecting cells against glycine mischarging by AlaRS. Acts via tRNA-based rather than protein-based catalysis; rejects L-amino acids rather than detecting D-amino acids in the active site. By recycling D-aminoacyl-tRNA to D-amino acids and free tRNA molecules, this enzyme counteracts the toxicity associated with the formation of D-aminoacyl-tRNA entities in vivo and helps enforce protein L-homochirality.</text>
</comment>
<comment type="catalytic activity">
    <reaction evidence="1">
        <text>glycyl-tRNA(Ala) + H2O = tRNA(Ala) + glycine + H(+)</text>
        <dbReference type="Rhea" id="RHEA:53744"/>
        <dbReference type="Rhea" id="RHEA-COMP:9657"/>
        <dbReference type="Rhea" id="RHEA-COMP:13640"/>
        <dbReference type="ChEBI" id="CHEBI:15377"/>
        <dbReference type="ChEBI" id="CHEBI:15378"/>
        <dbReference type="ChEBI" id="CHEBI:57305"/>
        <dbReference type="ChEBI" id="CHEBI:78442"/>
        <dbReference type="ChEBI" id="CHEBI:78522"/>
        <dbReference type="EC" id="3.1.1.96"/>
    </reaction>
</comment>
<comment type="catalytic activity">
    <reaction evidence="1">
        <text>a D-aminoacyl-tRNA + H2O = a tRNA + a D-alpha-amino acid + H(+)</text>
        <dbReference type="Rhea" id="RHEA:13953"/>
        <dbReference type="Rhea" id="RHEA-COMP:10123"/>
        <dbReference type="Rhea" id="RHEA-COMP:10124"/>
        <dbReference type="ChEBI" id="CHEBI:15377"/>
        <dbReference type="ChEBI" id="CHEBI:15378"/>
        <dbReference type="ChEBI" id="CHEBI:59871"/>
        <dbReference type="ChEBI" id="CHEBI:78442"/>
        <dbReference type="ChEBI" id="CHEBI:79333"/>
        <dbReference type="EC" id="3.1.1.96"/>
    </reaction>
</comment>
<comment type="subunit">
    <text evidence="1">Homodimer.</text>
</comment>
<comment type="subcellular location">
    <subcellularLocation>
        <location evidence="1">Cytoplasm</location>
    </subcellularLocation>
</comment>
<comment type="domain">
    <text evidence="1">A Gly-cisPro motif from one monomer fits into the active site of the other monomer to allow specific chiral rejection of L-amino acids.</text>
</comment>
<comment type="similarity">
    <text evidence="1">Belongs to the DTD family.</text>
</comment>
<accession>A2RGJ5</accession>
<name>DTD_STRPG</name>
<proteinExistence type="inferred from homology"/>
<dbReference type="EC" id="3.1.1.96" evidence="1"/>
<dbReference type="EMBL" id="AM295007">
    <property type="protein sequence ID" value="CAM30977.1"/>
    <property type="molecule type" value="Genomic_DNA"/>
</dbReference>
<dbReference type="RefSeq" id="WP_010922691.1">
    <property type="nucleotide sequence ID" value="NC_009332.1"/>
</dbReference>
<dbReference type="SMR" id="A2RGJ5"/>
<dbReference type="KEGG" id="spf:SpyM51657"/>
<dbReference type="HOGENOM" id="CLU_076901_1_0_9"/>
<dbReference type="GO" id="GO:0005737">
    <property type="term" value="C:cytoplasm"/>
    <property type="evidence" value="ECO:0007669"/>
    <property type="project" value="UniProtKB-SubCell"/>
</dbReference>
<dbReference type="GO" id="GO:0051500">
    <property type="term" value="F:D-tyrosyl-tRNA(Tyr) deacylase activity"/>
    <property type="evidence" value="ECO:0007669"/>
    <property type="project" value="TreeGrafter"/>
</dbReference>
<dbReference type="GO" id="GO:0106026">
    <property type="term" value="F:Gly-tRNA(Ala) deacylase activity"/>
    <property type="evidence" value="ECO:0007669"/>
    <property type="project" value="UniProtKB-UniRule"/>
</dbReference>
<dbReference type="GO" id="GO:0043908">
    <property type="term" value="F:Ser(Gly)-tRNA(Ala) hydrolase activity"/>
    <property type="evidence" value="ECO:0007669"/>
    <property type="project" value="UniProtKB-UniRule"/>
</dbReference>
<dbReference type="GO" id="GO:0000049">
    <property type="term" value="F:tRNA binding"/>
    <property type="evidence" value="ECO:0007669"/>
    <property type="project" value="UniProtKB-UniRule"/>
</dbReference>
<dbReference type="GO" id="GO:0019478">
    <property type="term" value="P:D-amino acid catabolic process"/>
    <property type="evidence" value="ECO:0007669"/>
    <property type="project" value="UniProtKB-UniRule"/>
</dbReference>
<dbReference type="CDD" id="cd00563">
    <property type="entry name" value="Dtyr_deacylase"/>
    <property type="match status" value="1"/>
</dbReference>
<dbReference type="FunFam" id="3.50.80.10:FF:000001">
    <property type="entry name" value="D-aminoacyl-tRNA deacylase"/>
    <property type="match status" value="1"/>
</dbReference>
<dbReference type="Gene3D" id="3.50.80.10">
    <property type="entry name" value="D-tyrosyl-tRNA(Tyr) deacylase"/>
    <property type="match status" value="1"/>
</dbReference>
<dbReference type="HAMAP" id="MF_00518">
    <property type="entry name" value="Deacylase_Dtd"/>
    <property type="match status" value="1"/>
</dbReference>
<dbReference type="InterPro" id="IPR003732">
    <property type="entry name" value="Daa-tRNA_deacyls_DTD"/>
</dbReference>
<dbReference type="InterPro" id="IPR023509">
    <property type="entry name" value="DTD-like_sf"/>
</dbReference>
<dbReference type="NCBIfam" id="TIGR00256">
    <property type="entry name" value="D-aminoacyl-tRNA deacylase"/>
    <property type="match status" value="1"/>
</dbReference>
<dbReference type="PANTHER" id="PTHR10472:SF5">
    <property type="entry name" value="D-AMINOACYL-TRNA DEACYLASE 1"/>
    <property type="match status" value="1"/>
</dbReference>
<dbReference type="PANTHER" id="PTHR10472">
    <property type="entry name" value="D-TYROSYL-TRNA TYR DEACYLASE"/>
    <property type="match status" value="1"/>
</dbReference>
<dbReference type="Pfam" id="PF02580">
    <property type="entry name" value="Tyr_Deacylase"/>
    <property type="match status" value="1"/>
</dbReference>
<dbReference type="SUPFAM" id="SSF69500">
    <property type="entry name" value="DTD-like"/>
    <property type="match status" value="1"/>
</dbReference>
<protein>
    <recommendedName>
        <fullName evidence="1">D-aminoacyl-tRNA deacylase</fullName>
        <shortName evidence="1">DTD</shortName>
        <ecNumber evidence="1">3.1.1.96</ecNumber>
    </recommendedName>
    <alternativeName>
        <fullName evidence="1">Gly-tRNA(Ala) deacylase</fullName>
    </alternativeName>
</protein>
<feature type="chain" id="PRO_1000050894" description="D-aminoacyl-tRNA deacylase">
    <location>
        <begin position="1"/>
        <end position="147"/>
    </location>
</feature>
<feature type="short sequence motif" description="Gly-cisPro motif, important for rejection of L-amino acids" evidence="1">
    <location>
        <begin position="136"/>
        <end position="137"/>
    </location>
</feature>
<evidence type="ECO:0000255" key="1">
    <source>
        <dbReference type="HAMAP-Rule" id="MF_00518"/>
    </source>
</evidence>
<gene>
    <name evidence="1" type="primary">dtd</name>
    <name type="ordered locus">SpyM51657</name>
</gene>
<sequence length="147" mass="15843">MKLVLQRVKEASVSIDGKIAGAINQGLLLLVGVGPDDNAEDLAYAVRKIVNMRIFSDADGKMNQSIQDIKGSILSVSQFTLYADTKKGNRPAFTGAAKPDLASQLYDSFNEQLAEFVPVERGVFGADMQVSLINDGPVTIILDTKCH</sequence>
<reference key="1">
    <citation type="journal article" date="2007" name="J. Bacteriol.">
        <title>Complete genome of acute rheumatic fever-associated serotype M5 Streptococcus pyogenes strain Manfredo.</title>
        <authorList>
            <person name="Holden M.T.G."/>
            <person name="Scott A."/>
            <person name="Cherevach I."/>
            <person name="Chillingworth T."/>
            <person name="Churcher C."/>
            <person name="Cronin A."/>
            <person name="Dowd L."/>
            <person name="Feltwell T."/>
            <person name="Hamlin N."/>
            <person name="Holroyd S."/>
            <person name="Jagels K."/>
            <person name="Moule S."/>
            <person name="Mungall K."/>
            <person name="Quail M.A."/>
            <person name="Price C."/>
            <person name="Rabbinowitsch E."/>
            <person name="Sharp S."/>
            <person name="Skelton J."/>
            <person name="Whitehead S."/>
            <person name="Barrell B.G."/>
            <person name="Kehoe M."/>
            <person name="Parkhill J."/>
        </authorList>
    </citation>
    <scope>NUCLEOTIDE SEQUENCE [LARGE SCALE GENOMIC DNA]</scope>
    <source>
        <strain>Manfredo</strain>
    </source>
</reference>
<keyword id="KW-0963">Cytoplasm</keyword>
<keyword id="KW-0378">Hydrolase</keyword>
<keyword id="KW-0694">RNA-binding</keyword>
<keyword id="KW-0820">tRNA-binding</keyword>
<organism>
    <name type="scientific">Streptococcus pyogenes serotype M5 (strain Manfredo)</name>
    <dbReference type="NCBI Taxonomy" id="160491"/>
    <lineage>
        <taxon>Bacteria</taxon>
        <taxon>Bacillati</taxon>
        <taxon>Bacillota</taxon>
        <taxon>Bacilli</taxon>
        <taxon>Lactobacillales</taxon>
        <taxon>Streptococcaceae</taxon>
        <taxon>Streptococcus</taxon>
    </lineage>
</organism>